<reference key="1">
    <citation type="journal article" date="2008" name="Antimicrob. Agents Chemother.">
        <title>Whole-genome pyrosequencing of an epidemic multidrug-resistant Acinetobacter baumannii strain belonging to the European clone II group.</title>
        <authorList>
            <person name="Iacono M."/>
            <person name="Villa L."/>
            <person name="Fortini D."/>
            <person name="Bordoni R."/>
            <person name="Imperi F."/>
            <person name="Bonnal R.J."/>
            <person name="Sicheritz-Ponten T."/>
            <person name="De Bellis G."/>
            <person name="Visca P."/>
            <person name="Cassone A."/>
            <person name="Carattoli A."/>
        </authorList>
    </citation>
    <scope>NUCLEOTIDE SEQUENCE [LARGE SCALE GENOMIC DNA]</scope>
    <source>
        <strain>ACICU</strain>
    </source>
</reference>
<organism>
    <name type="scientific">Acinetobacter baumannii (strain ACICU)</name>
    <dbReference type="NCBI Taxonomy" id="405416"/>
    <lineage>
        <taxon>Bacteria</taxon>
        <taxon>Pseudomonadati</taxon>
        <taxon>Pseudomonadota</taxon>
        <taxon>Gammaproteobacteria</taxon>
        <taxon>Moraxellales</taxon>
        <taxon>Moraxellaceae</taxon>
        <taxon>Acinetobacter</taxon>
        <taxon>Acinetobacter calcoaceticus/baumannii complex</taxon>
    </lineage>
</organism>
<gene>
    <name evidence="1" type="primary">obg</name>
    <name type="ordered locus">ACICU_02776</name>
</gene>
<accession>B2HWM9</accession>
<name>OBG_ACIBC</name>
<feature type="chain" id="PRO_0000385667" description="GTPase Obg">
    <location>
        <begin position="1"/>
        <end position="406"/>
    </location>
</feature>
<feature type="domain" description="Obg" evidence="2">
    <location>
        <begin position="1"/>
        <end position="159"/>
    </location>
</feature>
<feature type="domain" description="OBG-type G" evidence="1">
    <location>
        <begin position="160"/>
        <end position="333"/>
    </location>
</feature>
<feature type="region of interest" description="Disordered" evidence="3">
    <location>
        <begin position="120"/>
        <end position="143"/>
    </location>
</feature>
<feature type="region of interest" description="Disordered" evidence="3">
    <location>
        <begin position="381"/>
        <end position="406"/>
    </location>
</feature>
<feature type="compositionally biased region" description="Acidic residues" evidence="3">
    <location>
        <begin position="383"/>
        <end position="399"/>
    </location>
</feature>
<feature type="binding site" evidence="1">
    <location>
        <begin position="166"/>
        <end position="173"/>
    </location>
    <ligand>
        <name>GTP</name>
        <dbReference type="ChEBI" id="CHEBI:37565"/>
    </ligand>
</feature>
<feature type="binding site" evidence="1">
    <location>
        <position position="173"/>
    </location>
    <ligand>
        <name>Mg(2+)</name>
        <dbReference type="ChEBI" id="CHEBI:18420"/>
    </ligand>
</feature>
<feature type="binding site" evidence="1">
    <location>
        <begin position="191"/>
        <end position="195"/>
    </location>
    <ligand>
        <name>GTP</name>
        <dbReference type="ChEBI" id="CHEBI:37565"/>
    </ligand>
</feature>
<feature type="binding site" evidence="1">
    <location>
        <position position="193"/>
    </location>
    <ligand>
        <name>Mg(2+)</name>
        <dbReference type="ChEBI" id="CHEBI:18420"/>
    </ligand>
</feature>
<feature type="binding site" evidence="1">
    <location>
        <begin position="213"/>
        <end position="216"/>
    </location>
    <ligand>
        <name>GTP</name>
        <dbReference type="ChEBI" id="CHEBI:37565"/>
    </ligand>
</feature>
<feature type="binding site" evidence="1">
    <location>
        <begin position="283"/>
        <end position="286"/>
    </location>
    <ligand>
        <name>GTP</name>
        <dbReference type="ChEBI" id="CHEBI:37565"/>
    </ligand>
</feature>
<feature type="binding site" evidence="1">
    <location>
        <begin position="314"/>
        <end position="316"/>
    </location>
    <ligand>
        <name>GTP</name>
        <dbReference type="ChEBI" id="CHEBI:37565"/>
    </ligand>
</feature>
<comment type="function">
    <text evidence="1">An essential GTPase which binds GTP, GDP and possibly (p)ppGpp with moderate affinity, with high nucleotide exchange rates and a fairly low GTP hydrolysis rate. Plays a role in control of the cell cycle, stress response, ribosome biogenesis and in those bacteria that undergo differentiation, in morphogenesis control.</text>
</comment>
<comment type="cofactor">
    <cofactor evidence="1">
        <name>Mg(2+)</name>
        <dbReference type="ChEBI" id="CHEBI:18420"/>
    </cofactor>
</comment>
<comment type="subunit">
    <text evidence="1">Monomer.</text>
</comment>
<comment type="subcellular location">
    <subcellularLocation>
        <location evidence="1">Cytoplasm</location>
    </subcellularLocation>
</comment>
<comment type="similarity">
    <text evidence="1">Belongs to the TRAFAC class OBG-HflX-like GTPase superfamily. OBG GTPase family.</text>
</comment>
<proteinExistence type="inferred from homology"/>
<dbReference type="EC" id="3.6.5.-" evidence="1"/>
<dbReference type="EMBL" id="CP000863">
    <property type="protein sequence ID" value="ACC58088.1"/>
    <property type="molecule type" value="Genomic_DNA"/>
</dbReference>
<dbReference type="SMR" id="B2HWM9"/>
<dbReference type="KEGG" id="abc:ACICU_02776"/>
<dbReference type="HOGENOM" id="CLU_011747_2_0_6"/>
<dbReference type="Proteomes" id="UP000008839">
    <property type="component" value="Chromosome"/>
</dbReference>
<dbReference type="GO" id="GO:0005737">
    <property type="term" value="C:cytoplasm"/>
    <property type="evidence" value="ECO:0007669"/>
    <property type="project" value="UniProtKB-SubCell"/>
</dbReference>
<dbReference type="GO" id="GO:0005525">
    <property type="term" value="F:GTP binding"/>
    <property type="evidence" value="ECO:0007669"/>
    <property type="project" value="UniProtKB-UniRule"/>
</dbReference>
<dbReference type="GO" id="GO:0003924">
    <property type="term" value="F:GTPase activity"/>
    <property type="evidence" value="ECO:0007669"/>
    <property type="project" value="UniProtKB-UniRule"/>
</dbReference>
<dbReference type="GO" id="GO:0000287">
    <property type="term" value="F:magnesium ion binding"/>
    <property type="evidence" value="ECO:0007669"/>
    <property type="project" value="InterPro"/>
</dbReference>
<dbReference type="GO" id="GO:0042254">
    <property type="term" value="P:ribosome biogenesis"/>
    <property type="evidence" value="ECO:0007669"/>
    <property type="project" value="UniProtKB-UniRule"/>
</dbReference>
<dbReference type="CDD" id="cd01898">
    <property type="entry name" value="Obg"/>
    <property type="match status" value="1"/>
</dbReference>
<dbReference type="FunFam" id="2.70.210.12:FF:000001">
    <property type="entry name" value="GTPase Obg"/>
    <property type="match status" value="1"/>
</dbReference>
<dbReference type="Gene3D" id="2.70.210.12">
    <property type="entry name" value="GTP1/OBG domain"/>
    <property type="match status" value="1"/>
</dbReference>
<dbReference type="Gene3D" id="3.40.50.300">
    <property type="entry name" value="P-loop containing nucleotide triphosphate hydrolases"/>
    <property type="match status" value="1"/>
</dbReference>
<dbReference type="HAMAP" id="MF_01454">
    <property type="entry name" value="GTPase_Obg"/>
    <property type="match status" value="1"/>
</dbReference>
<dbReference type="InterPro" id="IPR031167">
    <property type="entry name" value="G_OBG"/>
</dbReference>
<dbReference type="InterPro" id="IPR006073">
    <property type="entry name" value="GTP-bd"/>
</dbReference>
<dbReference type="InterPro" id="IPR014100">
    <property type="entry name" value="GTP-bd_Obg/CgtA"/>
</dbReference>
<dbReference type="InterPro" id="IPR006074">
    <property type="entry name" value="GTP1-OBG_CS"/>
</dbReference>
<dbReference type="InterPro" id="IPR006169">
    <property type="entry name" value="GTP1_OBG_dom"/>
</dbReference>
<dbReference type="InterPro" id="IPR036726">
    <property type="entry name" value="GTP1_OBG_dom_sf"/>
</dbReference>
<dbReference type="InterPro" id="IPR045086">
    <property type="entry name" value="OBG_GTPase"/>
</dbReference>
<dbReference type="InterPro" id="IPR027417">
    <property type="entry name" value="P-loop_NTPase"/>
</dbReference>
<dbReference type="NCBIfam" id="TIGR02729">
    <property type="entry name" value="Obg_CgtA"/>
    <property type="match status" value="1"/>
</dbReference>
<dbReference type="NCBIfam" id="NF008955">
    <property type="entry name" value="PRK12297.1"/>
    <property type="match status" value="1"/>
</dbReference>
<dbReference type="NCBIfam" id="NF008956">
    <property type="entry name" value="PRK12299.1"/>
    <property type="match status" value="1"/>
</dbReference>
<dbReference type="PANTHER" id="PTHR11702">
    <property type="entry name" value="DEVELOPMENTALLY REGULATED GTP-BINDING PROTEIN-RELATED"/>
    <property type="match status" value="1"/>
</dbReference>
<dbReference type="PANTHER" id="PTHR11702:SF31">
    <property type="entry name" value="MITOCHONDRIAL RIBOSOME-ASSOCIATED GTPASE 2"/>
    <property type="match status" value="1"/>
</dbReference>
<dbReference type="Pfam" id="PF01018">
    <property type="entry name" value="GTP1_OBG"/>
    <property type="match status" value="1"/>
</dbReference>
<dbReference type="Pfam" id="PF01926">
    <property type="entry name" value="MMR_HSR1"/>
    <property type="match status" value="1"/>
</dbReference>
<dbReference type="PIRSF" id="PIRSF002401">
    <property type="entry name" value="GTP_bd_Obg/CgtA"/>
    <property type="match status" value="1"/>
</dbReference>
<dbReference type="PRINTS" id="PR00326">
    <property type="entry name" value="GTP1OBG"/>
</dbReference>
<dbReference type="SUPFAM" id="SSF82051">
    <property type="entry name" value="Obg GTP-binding protein N-terminal domain"/>
    <property type="match status" value="1"/>
</dbReference>
<dbReference type="SUPFAM" id="SSF52540">
    <property type="entry name" value="P-loop containing nucleoside triphosphate hydrolases"/>
    <property type="match status" value="1"/>
</dbReference>
<dbReference type="PROSITE" id="PS51710">
    <property type="entry name" value="G_OBG"/>
    <property type="match status" value="1"/>
</dbReference>
<dbReference type="PROSITE" id="PS00905">
    <property type="entry name" value="GTP1_OBG"/>
    <property type="match status" value="1"/>
</dbReference>
<dbReference type="PROSITE" id="PS51883">
    <property type="entry name" value="OBG"/>
    <property type="match status" value="1"/>
</dbReference>
<evidence type="ECO:0000255" key="1">
    <source>
        <dbReference type="HAMAP-Rule" id="MF_01454"/>
    </source>
</evidence>
<evidence type="ECO:0000255" key="2">
    <source>
        <dbReference type="PROSITE-ProRule" id="PRU01231"/>
    </source>
</evidence>
<evidence type="ECO:0000256" key="3">
    <source>
        <dbReference type="SAM" id="MobiDB-lite"/>
    </source>
</evidence>
<keyword id="KW-0963">Cytoplasm</keyword>
<keyword id="KW-0342">GTP-binding</keyword>
<keyword id="KW-0378">Hydrolase</keyword>
<keyword id="KW-0460">Magnesium</keyword>
<keyword id="KW-0479">Metal-binding</keyword>
<keyword id="KW-0547">Nucleotide-binding</keyword>
<sequence length="406" mass="44462">MRFVDEAVITVEAGDGGNGVASFRREKFVPFGGPDGGDGGRGGSIYIQADDDTSTLVDYRYTRKFRAERGKNGAGANCTGRGGEDVVLKVPVGTTIVDTDSGDIIGDLVEDGQRVMVASGGEGGLGNTHFKSSTNRAPRKCTTGTKGEFREIRLELKVLADVGLLGMPNAGKSTFIRAVSAAKPKVADYPFTTMVPNLGVVDADRHRSFVMADIPGLIEGAAEGAGLGIRFLKHLARTRILLHIIDVQPIDGSDPAHNAKAIMNELAKFSPTLAKLPIVLVLNKLDQIAEESREEWCQHILDELQWTGPVFKTSGLLEEGTKEVVYYLMDQIEQQREREVEDPEYAAEVRAFREQLEAETREQTIAAKEAYRAMRKAQRLESMMDDDDDFDDDEDDGDVESIYVRD</sequence>
<protein>
    <recommendedName>
        <fullName evidence="1">GTPase Obg</fullName>
        <ecNumber evidence="1">3.6.5.-</ecNumber>
    </recommendedName>
    <alternativeName>
        <fullName evidence="1">GTP-binding protein Obg</fullName>
    </alternativeName>
</protein>